<protein>
    <recommendedName>
        <fullName evidence="1">Ribosome-binding factor A</fullName>
    </recommendedName>
</protein>
<sequence length="123" mass="13751">MPKRKAAAPNRAFKVADQIQRDLTELIARELKDPRVGMVTIQAVEVTPDYAHAKIYFSMLTGDVTETTEALNQAAGFLRNGLFKRLHIHTVPTLHFLFDRTTERAADMNALIAQAVASRSKDD</sequence>
<keyword id="KW-0963">Cytoplasm</keyword>
<keyword id="KW-0690">Ribosome biogenesis</keyword>
<dbReference type="EMBL" id="CP001635">
    <property type="protein sequence ID" value="ACS19371.1"/>
    <property type="molecule type" value="Genomic_DNA"/>
</dbReference>
<dbReference type="SMR" id="C5CLW4"/>
<dbReference type="STRING" id="543728.Vapar_2749"/>
<dbReference type="KEGG" id="vap:Vapar_2749"/>
<dbReference type="eggNOG" id="COG0858">
    <property type="taxonomic scope" value="Bacteria"/>
</dbReference>
<dbReference type="HOGENOM" id="CLU_089475_5_1_4"/>
<dbReference type="OrthoDB" id="307788at2"/>
<dbReference type="GO" id="GO:0005829">
    <property type="term" value="C:cytosol"/>
    <property type="evidence" value="ECO:0007669"/>
    <property type="project" value="TreeGrafter"/>
</dbReference>
<dbReference type="GO" id="GO:0043024">
    <property type="term" value="F:ribosomal small subunit binding"/>
    <property type="evidence" value="ECO:0007669"/>
    <property type="project" value="TreeGrafter"/>
</dbReference>
<dbReference type="GO" id="GO:0030490">
    <property type="term" value="P:maturation of SSU-rRNA"/>
    <property type="evidence" value="ECO:0007669"/>
    <property type="project" value="UniProtKB-UniRule"/>
</dbReference>
<dbReference type="Gene3D" id="3.30.300.20">
    <property type="match status" value="1"/>
</dbReference>
<dbReference type="HAMAP" id="MF_00003">
    <property type="entry name" value="RbfA"/>
    <property type="match status" value="1"/>
</dbReference>
<dbReference type="InterPro" id="IPR015946">
    <property type="entry name" value="KH_dom-like_a/b"/>
</dbReference>
<dbReference type="InterPro" id="IPR000238">
    <property type="entry name" value="RbfA"/>
</dbReference>
<dbReference type="InterPro" id="IPR023799">
    <property type="entry name" value="RbfA_dom_sf"/>
</dbReference>
<dbReference type="NCBIfam" id="TIGR00082">
    <property type="entry name" value="rbfA"/>
    <property type="match status" value="1"/>
</dbReference>
<dbReference type="PANTHER" id="PTHR33515">
    <property type="entry name" value="RIBOSOME-BINDING FACTOR A, CHLOROPLASTIC-RELATED"/>
    <property type="match status" value="1"/>
</dbReference>
<dbReference type="PANTHER" id="PTHR33515:SF1">
    <property type="entry name" value="RIBOSOME-BINDING FACTOR A, CHLOROPLASTIC-RELATED"/>
    <property type="match status" value="1"/>
</dbReference>
<dbReference type="Pfam" id="PF02033">
    <property type="entry name" value="RBFA"/>
    <property type="match status" value="1"/>
</dbReference>
<dbReference type="SUPFAM" id="SSF89919">
    <property type="entry name" value="Ribosome-binding factor A, RbfA"/>
    <property type="match status" value="1"/>
</dbReference>
<name>RBFA_VARPS</name>
<evidence type="ECO:0000255" key="1">
    <source>
        <dbReference type="HAMAP-Rule" id="MF_00003"/>
    </source>
</evidence>
<proteinExistence type="inferred from homology"/>
<feature type="chain" id="PRO_1000201657" description="Ribosome-binding factor A">
    <location>
        <begin position="1"/>
        <end position="123"/>
    </location>
</feature>
<organism>
    <name type="scientific">Variovorax paradoxus (strain S110)</name>
    <dbReference type="NCBI Taxonomy" id="543728"/>
    <lineage>
        <taxon>Bacteria</taxon>
        <taxon>Pseudomonadati</taxon>
        <taxon>Pseudomonadota</taxon>
        <taxon>Betaproteobacteria</taxon>
        <taxon>Burkholderiales</taxon>
        <taxon>Comamonadaceae</taxon>
        <taxon>Variovorax</taxon>
    </lineage>
</organism>
<reference key="1">
    <citation type="journal article" date="2011" name="J. Bacteriol.">
        <title>Complete genome sequence of the metabolically versatile plant growth-promoting endophyte, Variovorax paradoxus S110.</title>
        <authorList>
            <person name="Han J.I."/>
            <person name="Choi H.K."/>
            <person name="Lee S.W."/>
            <person name="Orwin P.M."/>
            <person name="Kim J."/>
            <person name="Laroe S.L."/>
            <person name="Kim T.G."/>
            <person name="O'Neil J."/>
            <person name="Leadbetter J.R."/>
            <person name="Lee S.Y."/>
            <person name="Hur C.G."/>
            <person name="Spain J.C."/>
            <person name="Ovchinnikova G."/>
            <person name="Goodwin L."/>
            <person name="Han C."/>
        </authorList>
    </citation>
    <scope>NUCLEOTIDE SEQUENCE [LARGE SCALE GENOMIC DNA]</scope>
    <source>
        <strain>S110</strain>
    </source>
</reference>
<gene>
    <name evidence="1" type="primary">rbfA</name>
    <name type="ordered locus">Vapar_2749</name>
</gene>
<accession>C5CLW4</accession>
<comment type="function">
    <text evidence="1">One of several proteins that assist in the late maturation steps of the functional core of the 30S ribosomal subunit. Associates with free 30S ribosomal subunits (but not with 30S subunits that are part of 70S ribosomes or polysomes). Required for efficient processing of 16S rRNA. May interact with the 5'-terminal helix region of 16S rRNA.</text>
</comment>
<comment type="subunit">
    <text evidence="1">Monomer. Binds 30S ribosomal subunits, but not 50S ribosomal subunits or 70S ribosomes.</text>
</comment>
<comment type="subcellular location">
    <subcellularLocation>
        <location evidence="1">Cytoplasm</location>
    </subcellularLocation>
</comment>
<comment type="similarity">
    <text evidence="1">Belongs to the RbfA family.</text>
</comment>